<evidence type="ECO:0000255" key="1">
    <source>
        <dbReference type="HAMAP-Rule" id="MF_01346"/>
    </source>
</evidence>
<reference key="1">
    <citation type="journal article" date="2003" name="Genome Res.">
        <title>Comparative genome analysis of Vibrio vulnificus, a marine pathogen.</title>
        <authorList>
            <person name="Chen C.-Y."/>
            <person name="Wu K.-M."/>
            <person name="Chang Y.-C."/>
            <person name="Chang C.-H."/>
            <person name="Tsai H.-C."/>
            <person name="Liao T.-L."/>
            <person name="Liu Y.-M."/>
            <person name="Chen H.-J."/>
            <person name="Shen A.B.-T."/>
            <person name="Li J.-C."/>
            <person name="Su T.-L."/>
            <person name="Shao C.-P."/>
            <person name="Lee C.-T."/>
            <person name="Hor L.-I."/>
            <person name="Tsai S.-F."/>
        </authorList>
    </citation>
    <scope>NUCLEOTIDE SEQUENCE [LARGE SCALE GENOMIC DNA]</scope>
    <source>
        <strain>YJ016</strain>
    </source>
</reference>
<sequence>MHCSLNGDWSMQLNSTEISDLIKQRIESFNVVSEARNEGTIVSVSDGIIRIHGLADVMQGEMIELPGGRYALALNLERDSVGAVVMGPYADLKEGMKVTGTGRILEVPVGPELLGRVVNTLGEPIDGKGPIEAKLTSPVEVIAPGVIDRQSVDQPVQTGYKSVDSMIPIGRGQRELIIGDRQTGKTAMAIDAIINQKNSGIFSIYVAIGQKASTIANVVRKLEEHGALKNTIVVVASASESAALQYLAPYAGCAMGEYFRDRGEDALIVYDDLSKQAVAYRQISLLLKRPPGREAFPGDVFYLHSRLLERAARVNAEYVERFTNGEVKGKTGSLTALPIIETQAGDVSAFVPTNVISITDGQIFLQTELFNAGVRPAVDPGISVSRVGGSAQTKIIKKLSGGIRTALAAYRELAAFAQFSSDLDEATKRQLNHGQKVTELMKQKQYAPMSVFDQALTIFAAERGYLSDIELSKVLDFEAALLSYARGQYAELAAEIDKTGAYNDEIEAQLKKLTDDFKATQTW</sequence>
<keyword id="KW-0066">ATP synthesis</keyword>
<keyword id="KW-0067">ATP-binding</keyword>
<keyword id="KW-0997">Cell inner membrane</keyword>
<keyword id="KW-1003">Cell membrane</keyword>
<keyword id="KW-0139">CF(1)</keyword>
<keyword id="KW-0375">Hydrogen ion transport</keyword>
<keyword id="KW-0406">Ion transport</keyword>
<keyword id="KW-0472">Membrane</keyword>
<keyword id="KW-0547">Nucleotide-binding</keyword>
<keyword id="KW-1278">Translocase</keyword>
<keyword id="KW-0813">Transport</keyword>
<organism>
    <name type="scientific">Vibrio vulnificus (strain YJ016)</name>
    <dbReference type="NCBI Taxonomy" id="196600"/>
    <lineage>
        <taxon>Bacteria</taxon>
        <taxon>Pseudomonadati</taxon>
        <taxon>Pseudomonadota</taxon>
        <taxon>Gammaproteobacteria</taxon>
        <taxon>Vibrionales</taxon>
        <taxon>Vibrionaceae</taxon>
        <taxon>Vibrio</taxon>
    </lineage>
</organism>
<gene>
    <name evidence="1" type="primary">atpA</name>
    <name type="ordered locus">VV3253</name>
</gene>
<dbReference type="EC" id="7.1.2.2" evidence="1"/>
<dbReference type="EMBL" id="BA000037">
    <property type="protein sequence ID" value="BAC96017.1"/>
    <property type="molecule type" value="Genomic_DNA"/>
</dbReference>
<dbReference type="SMR" id="Q7MGH8"/>
<dbReference type="STRING" id="672.VV93_v1c29750"/>
<dbReference type="KEGG" id="vvy:VV3253"/>
<dbReference type="eggNOG" id="COG0056">
    <property type="taxonomic scope" value="Bacteria"/>
</dbReference>
<dbReference type="HOGENOM" id="CLU_010091_2_1_6"/>
<dbReference type="Proteomes" id="UP000002675">
    <property type="component" value="Chromosome I"/>
</dbReference>
<dbReference type="GO" id="GO:0005886">
    <property type="term" value="C:plasma membrane"/>
    <property type="evidence" value="ECO:0007669"/>
    <property type="project" value="UniProtKB-SubCell"/>
</dbReference>
<dbReference type="GO" id="GO:0045259">
    <property type="term" value="C:proton-transporting ATP synthase complex"/>
    <property type="evidence" value="ECO:0007669"/>
    <property type="project" value="UniProtKB-KW"/>
</dbReference>
<dbReference type="GO" id="GO:0043531">
    <property type="term" value="F:ADP binding"/>
    <property type="evidence" value="ECO:0007669"/>
    <property type="project" value="TreeGrafter"/>
</dbReference>
<dbReference type="GO" id="GO:0005524">
    <property type="term" value="F:ATP binding"/>
    <property type="evidence" value="ECO:0007669"/>
    <property type="project" value="UniProtKB-UniRule"/>
</dbReference>
<dbReference type="GO" id="GO:0046933">
    <property type="term" value="F:proton-transporting ATP synthase activity, rotational mechanism"/>
    <property type="evidence" value="ECO:0007669"/>
    <property type="project" value="UniProtKB-UniRule"/>
</dbReference>
<dbReference type="CDD" id="cd18113">
    <property type="entry name" value="ATP-synt_F1_alpha_C"/>
    <property type="match status" value="1"/>
</dbReference>
<dbReference type="CDD" id="cd18116">
    <property type="entry name" value="ATP-synt_F1_alpha_N"/>
    <property type="match status" value="1"/>
</dbReference>
<dbReference type="CDD" id="cd01132">
    <property type="entry name" value="F1-ATPase_alpha_CD"/>
    <property type="match status" value="1"/>
</dbReference>
<dbReference type="FunFam" id="1.20.150.20:FF:000001">
    <property type="entry name" value="ATP synthase subunit alpha"/>
    <property type="match status" value="1"/>
</dbReference>
<dbReference type="FunFam" id="2.40.30.20:FF:000001">
    <property type="entry name" value="ATP synthase subunit alpha"/>
    <property type="match status" value="1"/>
</dbReference>
<dbReference type="FunFam" id="3.40.50.300:FF:000002">
    <property type="entry name" value="ATP synthase subunit alpha"/>
    <property type="match status" value="1"/>
</dbReference>
<dbReference type="Gene3D" id="2.40.30.20">
    <property type="match status" value="1"/>
</dbReference>
<dbReference type="Gene3D" id="1.20.150.20">
    <property type="entry name" value="ATP synthase alpha/beta chain, C-terminal domain"/>
    <property type="match status" value="1"/>
</dbReference>
<dbReference type="Gene3D" id="3.40.50.300">
    <property type="entry name" value="P-loop containing nucleotide triphosphate hydrolases"/>
    <property type="match status" value="1"/>
</dbReference>
<dbReference type="HAMAP" id="MF_01346">
    <property type="entry name" value="ATP_synth_alpha_bact"/>
    <property type="match status" value="1"/>
</dbReference>
<dbReference type="InterPro" id="IPR023366">
    <property type="entry name" value="ATP_synth_asu-like_sf"/>
</dbReference>
<dbReference type="InterPro" id="IPR000793">
    <property type="entry name" value="ATP_synth_asu_C"/>
</dbReference>
<dbReference type="InterPro" id="IPR038376">
    <property type="entry name" value="ATP_synth_asu_C_sf"/>
</dbReference>
<dbReference type="InterPro" id="IPR033732">
    <property type="entry name" value="ATP_synth_F1_a_nt-bd_dom"/>
</dbReference>
<dbReference type="InterPro" id="IPR005294">
    <property type="entry name" value="ATP_synth_F1_asu"/>
</dbReference>
<dbReference type="InterPro" id="IPR020003">
    <property type="entry name" value="ATPase_a/bsu_AS"/>
</dbReference>
<dbReference type="InterPro" id="IPR004100">
    <property type="entry name" value="ATPase_F1/V1/A1_a/bsu_N"/>
</dbReference>
<dbReference type="InterPro" id="IPR036121">
    <property type="entry name" value="ATPase_F1/V1/A1_a/bsu_N_sf"/>
</dbReference>
<dbReference type="InterPro" id="IPR000194">
    <property type="entry name" value="ATPase_F1/V1/A1_a/bsu_nucl-bd"/>
</dbReference>
<dbReference type="InterPro" id="IPR027417">
    <property type="entry name" value="P-loop_NTPase"/>
</dbReference>
<dbReference type="NCBIfam" id="TIGR00962">
    <property type="entry name" value="atpA"/>
    <property type="match status" value="1"/>
</dbReference>
<dbReference type="NCBIfam" id="NF009884">
    <property type="entry name" value="PRK13343.1"/>
    <property type="match status" value="1"/>
</dbReference>
<dbReference type="PANTHER" id="PTHR48082">
    <property type="entry name" value="ATP SYNTHASE SUBUNIT ALPHA, MITOCHONDRIAL"/>
    <property type="match status" value="1"/>
</dbReference>
<dbReference type="PANTHER" id="PTHR48082:SF2">
    <property type="entry name" value="ATP SYNTHASE SUBUNIT ALPHA, MITOCHONDRIAL"/>
    <property type="match status" value="1"/>
</dbReference>
<dbReference type="Pfam" id="PF00006">
    <property type="entry name" value="ATP-synt_ab"/>
    <property type="match status" value="1"/>
</dbReference>
<dbReference type="Pfam" id="PF00306">
    <property type="entry name" value="ATP-synt_ab_C"/>
    <property type="match status" value="1"/>
</dbReference>
<dbReference type="Pfam" id="PF02874">
    <property type="entry name" value="ATP-synt_ab_N"/>
    <property type="match status" value="1"/>
</dbReference>
<dbReference type="SUPFAM" id="SSF47917">
    <property type="entry name" value="C-terminal domain of alpha and beta subunits of F1 ATP synthase"/>
    <property type="match status" value="1"/>
</dbReference>
<dbReference type="SUPFAM" id="SSF50615">
    <property type="entry name" value="N-terminal domain of alpha and beta subunits of F1 ATP synthase"/>
    <property type="match status" value="1"/>
</dbReference>
<dbReference type="SUPFAM" id="SSF52540">
    <property type="entry name" value="P-loop containing nucleoside triphosphate hydrolases"/>
    <property type="match status" value="1"/>
</dbReference>
<dbReference type="PROSITE" id="PS00152">
    <property type="entry name" value="ATPASE_ALPHA_BETA"/>
    <property type="match status" value="1"/>
</dbReference>
<feature type="chain" id="PRO_0000238397" description="ATP synthase subunit alpha">
    <location>
        <begin position="1"/>
        <end position="523"/>
    </location>
</feature>
<feature type="binding site" evidence="1">
    <location>
        <begin position="179"/>
        <end position="186"/>
    </location>
    <ligand>
        <name>ATP</name>
        <dbReference type="ChEBI" id="CHEBI:30616"/>
    </ligand>
</feature>
<feature type="site" description="Required for activity" evidence="1">
    <location>
        <position position="383"/>
    </location>
</feature>
<accession>Q7MGH8</accession>
<comment type="function">
    <text evidence="1">Produces ATP from ADP in the presence of a proton gradient across the membrane. The alpha chain is a regulatory subunit.</text>
</comment>
<comment type="catalytic activity">
    <reaction evidence="1">
        <text>ATP + H2O + 4 H(+)(in) = ADP + phosphate + 5 H(+)(out)</text>
        <dbReference type="Rhea" id="RHEA:57720"/>
        <dbReference type="ChEBI" id="CHEBI:15377"/>
        <dbReference type="ChEBI" id="CHEBI:15378"/>
        <dbReference type="ChEBI" id="CHEBI:30616"/>
        <dbReference type="ChEBI" id="CHEBI:43474"/>
        <dbReference type="ChEBI" id="CHEBI:456216"/>
        <dbReference type="EC" id="7.1.2.2"/>
    </reaction>
</comment>
<comment type="subunit">
    <text evidence="1">F-type ATPases have 2 components, CF(1) - the catalytic core - and CF(0) - the membrane proton channel. CF(1) has five subunits: alpha(3), beta(3), gamma(1), delta(1), epsilon(1). CF(0) has three main subunits: a(1), b(2) and c(9-12). The alpha and beta chains form an alternating ring which encloses part of the gamma chain. CF(1) is attached to CF(0) by a central stalk formed by the gamma and epsilon chains, while a peripheral stalk is formed by the delta and b chains.</text>
</comment>
<comment type="subcellular location">
    <subcellularLocation>
        <location evidence="1">Cell inner membrane</location>
        <topology evidence="1">Peripheral membrane protein</topology>
    </subcellularLocation>
</comment>
<comment type="similarity">
    <text evidence="1">Belongs to the ATPase alpha/beta chains family.</text>
</comment>
<proteinExistence type="inferred from homology"/>
<name>ATPA_VIBVY</name>
<protein>
    <recommendedName>
        <fullName evidence="1">ATP synthase subunit alpha</fullName>
        <ecNumber evidence="1">7.1.2.2</ecNumber>
    </recommendedName>
    <alternativeName>
        <fullName evidence="1">ATP synthase F1 sector subunit alpha</fullName>
    </alternativeName>
    <alternativeName>
        <fullName evidence="1">F-ATPase subunit alpha</fullName>
    </alternativeName>
</protein>